<dbReference type="EMBL" id="J04030">
    <property type="protein sequence ID" value="AAA23701.1"/>
    <property type="status" value="ALT_INIT"/>
    <property type="molecule type" value="Genomic_DNA"/>
</dbReference>
<dbReference type="EMBL" id="U14003">
    <property type="protein sequence ID" value="AAA97259.1"/>
    <property type="status" value="ALT_INIT"/>
    <property type="molecule type" value="Genomic_DNA"/>
</dbReference>
<dbReference type="EMBL" id="U00096">
    <property type="protein sequence ID" value="AAC77316.2"/>
    <property type="molecule type" value="Genomic_DNA"/>
</dbReference>
<dbReference type="EMBL" id="AP009048">
    <property type="protein sequence ID" value="BAE78350.1"/>
    <property type="molecule type" value="Genomic_DNA"/>
</dbReference>
<dbReference type="PIR" id="S56587">
    <property type="entry name" value="RMEC18"/>
</dbReference>
<dbReference type="RefSeq" id="NP_418780.2">
    <property type="nucleotide sequence ID" value="NC_000913.3"/>
</dbReference>
<dbReference type="RefSeq" id="WP_001308243.1">
    <property type="nucleotide sequence ID" value="NZ_SSZK01000015.1"/>
</dbReference>
<dbReference type="SMR" id="P18390"/>
<dbReference type="BioGRID" id="4261868">
    <property type="interactions" value="391"/>
</dbReference>
<dbReference type="FunCoup" id="P18390">
    <property type="interactions" value="15"/>
</dbReference>
<dbReference type="STRING" id="511145.b4360"/>
<dbReference type="jPOST" id="P18390"/>
<dbReference type="PaxDb" id="511145-b4360"/>
<dbReference type="EnsemblBacteria" id="AAC77316">
    <property type="protein sequence ID" value="AAC77316"/>
    <property type="gene ID" value="b4360"/>
</dbReference>
<dbReference type="GeneID" id="93777488"/>
<dbReference type="GeneID" id="948887"/>
<dbReference type="KEGG" id="ecj:JW5795"/>
<dbReference type="KEGG" id="eco:b4360"/>
<dbReference type="PATRIC" id="fig|511145.12.peg.4507"/>
<dbReference type="EchoBASE" id="EB1198"/>
<dbReference type="eggNOG" id="ENOG50320SA">
    <property type="taxonomic scope" value="Bacteria"/>
</dbReference>
<dbReference type="HOGENOM" id="CLU_112342_0_0_6"/>
<dbReference type="InParanoid" id="P18390"/>
<dbReference type="OMA" id="AASWQDQ"/>
<dbReference type="OrthoDB" id="8565817at2"/>
<dbReference type="PhylomeDB" id="P18390"/>
<dbReference type="BioCyc" id="EcoCyc:EG11214-MONOMER"/>
<dbReference type="PRO" id="PR:P18390"/>
<dbReference type="Proteomes" id="UP000000625">
    <property type="component" value="Chromosome"/>
</dbReference>
<dbReference type="GO" id="GO:0005829">
    <property type="term" value="C:cytosol"/>
    <property type="evidence" value="ECO:0000314"/>
    <property type="project" value="EcoCyc"/>
</dbReference>
<dbReference type="InterPro" id="IPR019637">
    <property type="entry name" value="DUF2501"/>
</dbReference>
<dbReference type="NCBIfam" id="NF008663">
    <property type="entry name" value="PRK11667.1-1"/>
    <property type="match status" value="1"/>
</dbReference>
<dbReference type="NCBIfam" id="NF008666">
    <property type="entry name" value="PRK11667.1-4"/>
    <property type="match status" value="1"/>
</dbReference>
<dbReference type="Pfam" id="PF10696">
    <property type="entry name" value="DUF2501"/>
    <property type="match status" value="1"/>
</dbReference>
<organism>
    <name type="scientific">Escherichia coli (strain K12)</name>
    <dbReference type="NCBI Taxonomy" id="83333"/>
    <lineage>
        <taxon>Bacteria</taxon>
        <taxon>Pseudomonadati</taxon>
        <taxon>Pseudomonadota</taxon>
        <taxon>Gammaproteobacteria</taxon>
        <taxon>Enterobacterales</taxon>
        <taxon>Enterobacteriaceae</taxon>
        <taxon>Escherichia</taxon>
    </lineage>
</organism>
<proteinExistence type="inferred from homology"/>
<name>YJJA_ECOLI</name>
<protein>
    <recommendedName>
        <fullName>Uncharacterized protein YjjA</fullName>
    </recommendedName>
    <alternativeName>
        <fullName>Protein P-18</fullName>
    </alternativeName>
</protein>
<accession>P18390</accession>
<accession>Q2M5V6</accession>
<reference key="1">
    <citation type="journal article" date="1988" name="J. Biol. Chem.">
        <title>Operon structure of dnaT and dnaC genes essential for normal and stable DNA replication of Escherichia coli chromosome.</title>
        <authorList>
            <person name="Masai H."/>
            <person name="Arai K."/>
        </authorList>
    </citation>
    <scope>NUCLEOTIDE SEQUENCE [GENOMIC DNA]</scope>
    <source>
        <strain>K12</strain>
    </source>
</reference>
<reference key="2">
    <citation type="journal article" date="1995" name="Nucleic Acids Res.">
        <title>Analysis of the Escherichia coli genome VI: DNA sequence of the region from 92.8 through 100 minutes.</title>
        <authorList>
            <person name="Burland V.D."/>
            <person name="Plunkett G. III"/>
            <person name="Sofia H.J."/>
            <person name="Daniels D.L."/>
            <person name="Blattner F.R."/>
        </authorList>
    </citation>
    <scope>NUCLEOTIDE SEQUENCE [LARGE SCALE GENOMIC DNA]</scope>
    <source>
        <strain>K12 / MG1655 / ATCC 47076</strain>
    </source>
</reference>
<reference key="3">
    <citation type="journal article" date="1997" name="Science">
        <title>The complete genome sequence of Escherichia coli K-12.</title>
        <authorList>
            <person name="Blattner F.R."/>
            <person name="Plunkett G. III"/>
            <person name="Bloch C.A."/>
            <person name="Perna N.T."/>
            <person name="Burland V."/>
            <person name="Riley M."/>
            <person name="Collado-Vides J."/>
            <person name="Glasner J.D."/>
            <person name="Rode C.K."/>
            <person name="Mayhew G.F."/>
            <person name="Gregor J."/>
            <person name="Davis N.W."/>
            <person name="Kirkpatrick H.A."/>
            <person name="Goeden M.A."/>
            <person name="Rose D.J."/>
            <person name="Mau B."/>
            <person name="Shao Y."/>
        </authorList>
    </citation>
    <scope>NUCLEOTIDE SEQUENCE [LARGE SCALE GENOMIC DNA]</scope>
    <source>
        <strain>K12 / MG1655 / ATCC 47076</strain>
    </source>
</reference>
<reference key="4">
    <citation type="journal article" date="2006" name="Mol. Syst. Biol.">
        <title>Highly accurate genome sequences of Escherichia coli K-12 strains MG1655 and W3110.</title>
        <authorList>
            <person name="Hayashi K."/>
            <person name="Morooka N."/>
            <person name="Yamamoto Y."/>
            <person name="Fujita K."/>
            <person name="Isono K."/>
            <person name="Choi S."/>
            <person name="Ohtsubo E."/>
            <person name="Baba T."/>
            <person name="Wanner B.L."/>
            <person name="Mori H."/>
            <person name="Horiuchi T."/>
        </authorList>
    </citation>
    <scope>NUCLEOTIDE SEQUENCE [LARGE SCALE GENOMIC DNA]</scope>
    <source>
        <strain>K12 / W3110 / ATCC 27325 / DSM 5911</strain>
    </source>
</reference>
<evidence type="ECO:0000255" key="1"/>
<evidence type="ECO:0000305" key="2"/>
<sequence length="164" mass="17353">MMKTVKHLLCCAIAASALISTGVHAASWKDALSSAASELGNQNSTTQEGGWSLASLTNLLSSGNQALSADNMNNAAGILQYCAKQKLASVTDAENIKNQVLEKLGLNSEEQKEDTNYLDGIQGLLKTKDGQQLNLDNIGTTPLAEKVKTKACDLVLKQGLNFIS</sequence>
<gene>
    <name type="primary">yjjA</name>
    <name type="ordered locus">b4360</name>
    <name type="ordered locus">JW5795</name>
</gene>
<feature type="signal peptide" evidence="1">
    <location>
        <begin position="1"/>
        <end position="25"/>
    </location>
</feature>
<feature type="chain" id="PRO_0000013943" description="Uncharacterized protein YjjA">
    <location>
        <begin position="26"/>
        <end position="164"/>
    </location>
</feature>
<feature type="sequence conflict" description="In Ref. 1; AAA23701." evidence="2" ref="1">
    <original>NA</original>
    <variation>KS</variation>
    <location>
        <begin position="74"/>
        <end position="75"/>
    </location>
</feature>
<keyword id="KW-1185">Reference proteome</keyword>
<keyword id="KW-0732">Signal</keyword>
<comment type="sequence caution" evidence="2">
    <conflict type="erroneous initiation">
        <sequence resource="EMBL-CDS" id="AAA23701"/>
    </conflict>
    <text>Extended N-terminus.</text>
</comment>
<comment type="sequence caution" evidence="2">
    <conflict type="erroneous initiation">
        <sequence resource="EMBL-CDS" id="AAA97259"/>
    </conflict>
    <text>Extended N-terminus.</text>
</comment>